<feature type="chain" id="PRO_0000242776" description="Octanoyltransferase">
    <location>
        <begin position="1"/>
        <end position="236"/>
    </location>
</feature>
<feature type="domain" description="BPL/LPL catalytic" evidence="2">
    <location>
        <begin position="36"/>
        <end position="220"/>
    </location>
</feature>
<feature type="active site" description="Acyl-thioester intermediate" evidence="1">
    <location>
        <position position="181"/>
    </location>
</feature>
<feature type="binding site" evidence="1">
    <location>
        <begin position="76"/>
        <end position="83"/>
    </location>
    <ligand>
        <name>substrate</name>
    </ligand>
</feature>
<feature type="binding site" evidence="1">
    <location>
        <begin position="150"/>
        <end position="152"/>
    </location>
    <ligand>
        <name>substrate</name>
    </ligand>
</feature>
<feature type="binding site" evidence="1">
    <location>
        <begin position="163"/>
        <end position="165"/>
    </location>
    <ligand>
        <name>substrate</name>
    </ligand>
</feature>
<feature type="site" description="Lowers pKa of active site Cys" evidence="1">
    <location>
        <position position="147"/>
    </location>
</feature>
<gene>
    <name evidence="1" type="primary">lipB</name>
    <name type="ordered locus">Tfu_0992</name>
</gene>
<name>LIPB_THEFY</name>
<proteinExistence type="inferred from homology"/>
<protein>
    <recommendedName>
        <fullName evidence="1">Octanoyltransferase</fullName>
        <ecNumber evidence="1">2.3.1.181</ecNumber>
    </recommendedName>
    <alternativeName>
        <fullName evidence="1">Lipoate-protein ligase B</fullName>
    </alternativeName>
    <alternativeName>
        <fullName evidence="1">Lipoyl/octanoyl transferase</fullName>
    </alternativeName>
    <alternativeName>
        <fullName evidence="1">Octanoyl-[acyl-carrier-protein]-protein N-octanoyltransferase</fullName>
    </alternativeName>
</protein>
<organism>
    <name type="scientific">Thermobifida fusca (strain YX)</name>
    <dbReference type="NCBI Taxonomy" id="269800"/>
    <lineage>
        <taxon>Bacteria</taxon>
        <taxon>Bacillati</taxon>
        <taxon>Actinomycetota</taxon>
        <taxon>Actinomycetes</taxon>
        <taxon>Streptosporangiales</taxon>
        <taxon>Nocardiopsidaceae</taxon>
        <taxon>Thermobifida</taxon>
    </lineage>
</organism>
<reference key="1">
    <citation type="journal article" date="2007" name="J. Bacteriol.">
        <title>Genome sequence and analysis of the soil cellulolytic actinomycete Thermobifida fusca YX.</title>
        <authorList>
            <person name="Lykidis A."/>
            <person name="Mavromatis K."/>
            <person name="Ivanova N."/>
            <person name="Anderson I."/>
            <person name="Land M."/>
            <person name="DiBartolo G."/>
            <person name="Martinez M."/>
            <person name="Lapidus A."/>
            <person name="Lucas S."/>
            <person name="Copeland A."/>
            <person name="Richardson P."/>
            <person name="Wilson D.B."/>
            <person name="Kyrpides N."/>
        </authorList>
    </citation>
    <scope>NUCLEOTIDE SEQUENCE [LARGE SCALE GENOMIC DNA]</scope>
    <source>
        <strain>YX</strain>
    </source>
</reference>
<dbReference type="EC" id="2.3.1.181" evidence="1"/>
<dbReference type="EMBL" id="CP000088">
    <property type="protein sequence ID" value="AAZ55030.1"/>
    <property type="molecule type" value="Genomic_DNA"/>
</dbReference>
<dbReference type="SMR" id="Q47R87"/>
<dbReference type="STRING" id="269800.Tfu_0992"/>
<dbReference type="KEGG" id="tfu:Tfu_0992"/>
<dbReference type="eggNOG" id="COG0321">
    <property type="taxonomic scope" value="Bacteria"/>
</dbReference>
<dbReference type="HOGENOM" id="CLU_035168_2_1_11"/>
<dbReference type="UniPathway" id="UPA00538">
    <property type="reaction ID" value="UER00592"/>
</dbReference>
<dbReference type="GO" id="GO:0005737">
    <property type="term" value="C:cytoplasm"/>
    <property type="evidence" value="ECO:0007669"/>
    <property type="project" value="UniProtKB-SubCell"/>
</dbReference>
<dbReference type="GO" id="GO:0033819">
    <property type="term" value="F:lipoyl(octanoyl) transferase activity"/>
    <property type="evidence" value="ECO:0007669"/>
    <property type="project" value="UniProtKB-EC"/>
</dbReference>
<dbReference type="GO" id="GO:0036211">
    <property type="term" value="P:protein modification process"/>
    <property type="evidence" value="ECO:0007669"/>
    <property type="project" value="InterPro"/>
</dbReference>
<dbReference type="CDD" id="cd16444">
    <property type="entry name" value="LipB"/>
    <property type="match status" value="1"/>
</dbReference>
<dbReference type="FunFam" id="3.30.930.10:FF:000035">
    <property type="entry name" value="Putative lipoyltransferase 2, mitochondrial"/>
    <property type="match status" value="1"/>
</dbReference>
<dbReference type="Gene3D" id="3.30.930.10">
    <property type="entry name" value="Bira Bifunctional Protein, Domain 2"/>
    <property type="match status" value="1"/>
</dbReference>
<dbReference type="HAMAP" id="MF_00013">
    <property type="entry name" value="LipB"/>
    <property type="match status" value="1"/>
</dbReference>
<dbReference type="InterPro" id="IPR045864">
    <property type="entry name" value="aa-tRNA-synth_II/BPL/LPL"/>
</dbReference>
<dbReference type="InterPro" id="IPR004143">
    <property type="entry name" value="BPL_LPL_catalytic"/>
</dbReference>
<dbReference type="InterPro" id="IPR000544">
    <property type="entry name" value="Octanoyltransferase"/>
</dbReference>
<dbReference type="InterPro" id="IPR020605">
    <property type="entry name" value="Octanoyltransferase_CS"/>
</dbReference>
<dbReference type="NCBIfam" id="TIGR00214">
    <property type="entry name" value="lipB"/>
    <property type="match status" value="1"/>
</dbReference>
<dbReference type="NCBIfam" id="NF010925">
    <property type="entry name" value="PRK14345.1"/>
    <property type="match status" value="1"/>
</dbReference>
<dbReference type="PANTHER" id="PTHR10993:SF7">
    <property type="entry name" value="LIPOYLTRANSFERASE 2, MITOCHONDRIAL-RELATED"/>
    <property type="match status" value="1"/>
</dbReference>
<dbReference type="PANTHER" id="PTHR10993">
    <property type="entry name" value="OCTANOYLTRANSFERASE"/>
    <property type="match status" value="1"/>
</dbReference>
<dbReference type="Pfam" id="PF21948">
    <property type="entry name" value="LplA-B_cat"/>
    <property type="match status" value="1"/>
</dbReference>
<dbReference type="PIRSF" id="PIRSF016262">
    <property type="entry name" value="LPLase"/>
    <property type="match status" value="1"/>
</dbReference>
<dbReference type="SUPFAM" id="SSF55681">
    <property type="entry name" value="Class II aaRS and biotin synthetases"/>
    <property type="match status" value="1"/>
</dbReference>
<dbReference type="PROSITE" id="PS51733">
    <property type="entry name" value="BPL_LPL_CATALYTIC"/>
    <property type="match status" value="1"/>
</dbReference>
<dbReference type="PROSITE" id="PS01313">
    <property type="entry name" value="LIPB"/>
    <property type="match status" value="1"/>
</dbReference>
<comment type="function">
    <text evidence="1">Catalyzes the transfer of endogenously produced octanoic acid from octanoyl-acyl-carrier-protein onto the lipoyl domains of lipoate-dependent enzymes. Lipoyl-ACP can also act as a substrate although octanoyl-ACP is likely to be the physiological substrate.</text>
</comment>
<comment type="catalytic activity">
    <reaction evidence="1">
        <text>octanoyl-[ACP] + L-lysyl-[protein] = N(6)-octanoyl-L-lysyl-[protein] + holo-[ACP] + H(+)</text>
        <dbReference type="Rhea" id="RHEA:17665"/>
        <dbReference type="Rhea" id="RHEA-COMP:9636"/>
        <dbReference type="Rhea" id="RHEA-COMP:9685"/>
        <dbReference type="Rhea" id="RHEA-COMP:9752"/>
        <dbReference type="Rhea" id="RHEA-COMP:9928"/>
        <dbReference type="ChEBI" id="CHEBI:15378"/>
        <dbReference type="ChEBI" id="CHEBI:29969"/>
        <dbReference type="ChEBI" id="CHEBI:64479"/>
        <dbReference type="ChEBI" id="CHEBI:78463"/>
        <dbReference type="ChEBI" id="CHEBI:78809"/>
        <dbReference type="EC" id="2.3.1.181"/>
    </reaction>
</comment>
<comment type="pathway">
    <text evidence="1">Protein modification; protein lipoylation via endogenous pathway; protein N(6)-(lipoyl)lysine from octanoyl-[acyl-carrier-protein]: step 1/2.</text>
</comment>
<comment type="subcellular location">
    <subcellularLocation>
        <location evidence="1">Cytoplasm</location>
    </subcellularLocation>
</comment>
<comment type="miscellaneous">
    <text evidence="1">In the reaction, the free carboxyl group of octanoic acid is attached via an amide linkage to the epsilon-amino group of a specific lysine residue of lipoyl domains of lipoate-dependent enzymes.</text>
</comment>
<comment type="similarity">
    <text evidence="1">Belongs to the LipB family.</text>
</comment>
<sequence length="236" mass="25887">MKSVSELLYHWLGESPVPYMEGWELQRQLHKRRVADQVPDTVLLLEHEPVYTAGKRTGPWDRPLTDPGAPVIDIDRGGKITWHGPGQLTAYPIVKLPAPLDVVAYVRMLEEAIIRVIGDFGLSGMRVEGRTGVWLAAAPDRGLPERKIAAIGCRIAKGVTMHGFALNCNNDLSWFDRIVPCGIRDAGVTSLTAELDRTVGVGDILEATEHHLAAVLGASSYRRIAGWPVLPEFVDA</sequence>
<accession>Q47R87</accession>
<keyword id="KW-0012">Acyltransferase</keyword>
<keyword id="KW-0963">Cytoplasm</keyword>
<keyword id="KW-0808">Transferase</keyword>
<evidence type="ECO:0000255" key="1">
    <source>
        <dbReference type="HAMAP-Rule" id="MF_00013"/>
    </source>
</evidence>
<evidence type="ECO:0000255" key="2">
    <source>
        <dbReference type="PROSITE-ProRule" id="PRU01067"/>
    </source>
</evidence>